<protein>
    <recommendedName>
        <fullName>SRY-related protein CH3</fullName>
    </recommendedName>
</protein>
<comment type="subcellular location">
    <subcellularLocation>
        <location evidence="1">Nucleus</location>
    </subcellularLocation>
</comment>
<accession>P40667</accession>
<keyword id="KW-0238">DNA-binding</keyword>
<keyword id="KW-0539">Nucleus</keyword>
<keyword id="KW-1185">Reference proteome</keyword>
<feature type="chain" id="PRO_0000048781" description="SRY-related protein CH3">
    <location>
        <begin position="1" status="less than"/>
        <end position="54" status="greater than"/>
    </location>
</feature>
<feature type="DNA-binding region" description="HMG box" evidence="1">
    <location>
        <begin position="1" status="less than"/>
        <end position="54" status="greater than"/>
    </location>
</feature>
<feature type="non-terminal residue">
    <location>
        <position position="1"/>
    </location>
</feature>
<feature type="non-terminal residue">
    <location>
        <position position="54"/>
    </location>
</feature>
<name>CH03_CHICK</name>
<dbReference type="EMBL" id="M86322">
    <property type="protein sequence ID" value="AAA48681.1"/>
    <property type="molecule type" value="Genomic_DNA"/>
</dbReference>
<dbReference type="SMR" id="P40667"/>
<dbReference type="FunCoup" id="P40667">
    <property type="interactions" value="6"/>
</dbReference>
<dbReference type="VEuPathDB" id="HostDB:geneid_374019"/>
<dbReference type="InParanoid" id="P40667"/>
<dbReference type="Proteomes" id="UP000000539">
    <property type="component" value="Unassembled WGS sequence"/>
</dbReference>
<dbReference type="GO" id="GO:0005634">
    <property type="term" value="C:nucleus"/>
    <property type="evidence" value="ECO:0007669"/>
    <property type="project" value="UniProtKB-SubCell"/>
</dbReference>
<dbReference type="GO" id="GO:0003677">
    <property type="term" value="F:DNA binding"/>
    <property type="evidence" value="ECO:0007669"/>
    <property type="project" value="UniProtKB-KW"/>
</dbReference>
<dbReference type="GO" id="GO:0032502">
    <property type="term" value="P:developmental process"/>
    <property type="evidence" value="ECO:0007669"/>
    <property type="project" value="UniProtKB-ARBA"/>
</dbReference>
<dbReference type="FunFam" id="1.10.30.10:FF:000074">
    <property type="entry name" value="SRY-related protein AMA1"/>
    <property type="match status" value="1"/>
</dbReference>
<dbReference type="Gene3D" id="1.10.30.10">
    <property type="entry name" value="High mobility group box domain"/>
    <property type="match status" value="1"/>
</dbReference>
<dbReference type="InterPro" id="IPR009071">
    <property type="entry name" value="HMG_box_dom"/>
</dbReference>
<dbReference type="InterPro" id="IPR036910">
    <property type="entry name" value="HMG_box_dom_sf"/>
</dbReference>
<dbReference type="InterPro" id="IPR050140">
    <property type="entry name" value="SRY-related_HMG-box_TF-like"/>
</dbReference>
<dbReference type="PANTHER" id="PTHR10270">
    <property type="entry name" value="SOX TRANSCRIPTION FACTOR"/>
    <property type="match status" value="1"/>
</dbReference>
<dbReference type="PANTHER" id="PTHR10270:SF231">
    <property type="entry name" value="TRANSCRIPTION FACTOR SOX-2"/>
    <property type="match status" value="1"/>
</dbReference>
<dbReference type="Pfam" id="PF00505">
    <property type="entry name" value="HMG_box"/>
    <property type="match status" value="1"/>
</dbReference>
<dbReference type="SMART" id="SM00398">
    <property type="entry name" value="HMG"/>
    <property type="match status" value="1"/>
</dbReference>
<dbReference type="SUPFAM" id="SSF47095">
    <property type="entry name" value="HMG-box"/>
    <property type="match status" value="1"/>
</dbReference>
<dbReference type="PROSITE" id="PS50118">
    <property type="entry name" value="HMG_BOX_2"/>
    <property type="match status" value="1"/>
</dbReference>
<evidence type="ECO:0000255" key="1">
    <source>
        <dbReference type="PROSITE-ProRule" id="PRU00267"/>
    </source>
</evidence>
<sequence length="54" mass="6489">MAQENPKMHNSEISKRLGADWKLLSDAEKRPFIDEAKRLRAVHMKEYPDYKYRP</sequence>
<proteinExistence type="inferred from homology"/>
<organism>
    <name type="scientific">Gallus gallus</name>
    <name type="common">Chicken</name>
    <dbReference type="NCBI Taxonomy" id="9031"/>
    <lineage>
        <taxon>Eukaryota</taxon>
        <taxon>Metazoa</taxon>
        <taxon>Chordata</taxon>
        <taxon>Craniata</taxon>
        <taxon>Vertebrata</taxon>
        <taxon>Euteleostomi</taxon>
        <taxon>Archelosauria</taxon>
        <taxon>Archosauria</taxon>
        <taxon>Dinosauria</taxon>
        <taxon>Saurischia</taxon>
        <taxon>Theropoda</taxon>
        <taxon>Coelurosauria</taxon>
        <taxon>Aves</taxon>
        <taxon>Neognathae</taxon>
        <taxon>Galloanserae</taxon>
        <taxon>Galliformes</taxon>
        <taxon>Phasianidae</taxon>
        <taxon>Phasianinae</taxon>
        <taxon>Gallus</taxon>
    </lineage>
</organism>
<reference key="1">
    <citation type="journal article" date="1993" name="PCR Methods Appl.">
        <title>PCR amplification of SRY-related gene sequences reveals evolutionary conservation of the SRY-box motif.</title>
        <authorList>
            <person name="Coriat A.M."/>
            <person name="Mueller U."/>
            <person name="Harry J.L."/>
            <person name="Uwanogho D."/>
            <person name="Sharpe P.T."/>
        </authorList>
    </citation>
    <scope>NUCLEOTIDE SEQUENCE [GENOMIC DNA]</scope>
    <source>
        <tissue>Blood</tissue>
    </source>
</reference>